<comment type="function">
    <text evidence="4 5 6">Member of the two-component regulatory system TtrR/TtrS, which is required for synthesis of tetrathionate reductase. Positively regulates transcription of the ttrBCA operon. During mice infection, the ability to use tetrathionate as an electron acceptor is a growth advantage for S.typhimurium over the competing microbiota in the lumen of the inflamed gut.</text>
</comment>
<comment type="subcellular location">
    <subcellularLocation>
        <location evidence="7">Cytoplasm</location>
    </subcellularLocation>
</comment>
<comment type="PTM">
    <text evidence="1">Phosphorylated by TtrS.</text>
</comment>
<organism>
    <name type="scientific">Salmonella typhimurium (strain LT2 / SGSC1412 / ATCC 700720)</name>
    <dbReference type="NCBI Taxonomy" id="99287"/>
    <lineage>
        <taxon>Bacteria</taxon>
        <taxon>Pseudomonadati</taxon>
        <taxon>Pseudomonadota</taxon>
        <taxon>Gammaproteobacteria</taxon>
        <taxon>Enterobacterales</taxon>
        <taxon>Enterobacteriaceae</taxon>
        <taxon>Salmonella</taxon>
    </lineage>
</organism>
<dbReference type="EMBL" id="AJ224978">
    <property type="protein sequence ID" value="CAB37412.1"/>
    <property type="molecule type" value="Genomic_DNA"/>
</dbReference>
<dbReference type="EMBL" id="AF282268">
    <property type="protein sequence ID" value="AAG31755.1"/>
    <property type="molecule type" value="Genomic_DNA"/>
</dbReference>
<dbReference type="EMBL" id="AE006468">
    <property type="protein sequence ID" value="AAL20311.1"/>
    <property type="molecule type" value="Genomic_DNA"/>
</dbReference>
<dbReference type="RefSeq" id="NP_460352.3">
    <property type="nucleotide sequence ID" value="NC_003197.2"/>
</dbReference>
<dbReference type="RefSeq" id="WP_000190927.1">
    <property type="nucleotide sequence ID" value="NC_003197.2"/>
</dbReference>
<dbReference type="SMR" id="Q7CQM8"/>
<dbReference type="STRING" id="99287.STM1387"/>
<dbReference type="PaxDb" id="99287-STM1387"/>
<dbReference type="GeneID" id="1252905"/>
<dbReference type="KEGG" id="stm:STM1387"/>
<dbReference type="HOGENOM" id="CLU_000445_90_4_6"/>
<dbReference type="PhylomeDB" id="Q7CQM8"/>
<dbReference type="BioCyc" id="SENT99287:STM1387-MONOMER"/>
<dbReference type="PHI-base" id="PHI:10117"/>
<dbReference type="Proteomes" id="UP000001014">
    <property type="component" value="Chromosome"/>
</dbReference>
<dbReference type="GO" id="GO:0005829">
    <property type="term" value="C:cytosol"/>
    <property type="evidence" value="ECO:0000318"/>
    <property type="project" value="GO_Central"/>
</dbReference>
<dbReference type="GO" id="GO:0032993">
    <property type="term" value="C:protein-DNA complex"/>
    <property type="evidence" value="ECO:0000318"/>
    <property type="project" value="GO_Central"/>
</dbReference>
<dbReference type="GO" id="GO:0000156">
    <property type="term" value="F:phosphorelay response regulator activity"/>
    <property type="evidence" value="ECO:0000318"/>
    <property type="project" value="GO_Central"/>
</dbReference>
<dbReference type="GO" id="GO:0000976">
    <property type="term" value="F:transcription cis-regulatory region binding"/>
    <property type="evidence" value="ECO:0000318"/>
    <property type="project" value="GO_Central"/>
</dbReference>
<dbReference type="GO" id="GO:0006355">
    <property type="term" value="P:regulation of DNA-templated transcription"/>
    <property type="evidence" value="ECO:0000318"/>
    <property type="project" value="GO_Central"/>
</dbReference>
<dbReference type="CDD" id="cd06170">
    <property type="entry name" value="LuxR_C_like"/>
    <property type="match status" value="1"/>
</dbReference>
<dbReference type="CDD" id="cd17537">
    <property type="entry name" value="REC_FixJ"/>
    <property type="match status" value="1"/>
</dbReference>
<dbReference type="Gene3D" id="3.40.50.2300">
    <property type="match status" value="1"/>
</dbReference>
<dbReference type="Gene3D" id="1.10.10.10">
    <property type="entry name" value="Winged helix-like DNA-binding domain superfamily/Winged helix DNA-binding domain"/>
    <property type="match status" value="1"/>
</dbReference>
<dbReference type="InterPro" id="IPR011006">
    <property type="entry name" value="CheY-like_superfamily"/>
</dbReference>
<dbReference type="InterPro" id="IPR001789">
    <property type="entry name" value="Sig_transdc_resp-reg_receiver"/>
</dbReference>
<dbReference type="InterPro" id="IPR053534">
    <property type="entry name" value="Tetrathionate_resp_reg"/>
</dbReference>
<dbReference type="InterPro" id="IPR000792">
    <property type="entry name" value="Tscrpt_reg_LuxR_C"/>
</dbReference>
<dbReference type="InterPro" id="IPR036388">
    <property type="entry name" value="WH-like_DNA-bd_sf"/>
</dbReference>
<dbReference type="NCBIfam" id="NF040749">
    <property type="entry name" value="tetrathio_RR"/>
    <property type="match status" value="1"/>
</dbReference>
<dbReference type="PANTHER" id="PTHR44688">
    <property type="entry name" value="DNA-BINDING TRANSCRIPTIONAL ACTIVATOR DEVR_DOSR"/>
    <property type="match status" value="1"/>
</dbReference>
<dbReference type="PANTHER" id="PTHR44688:SF16">
    <property type="entry name" value="DNA-BINDING TRANSCRIPTIONAL ACTIVATOR DEVR_DOSR"/>
    <property type="match status" value="1"/>
</dbReference>
<dbReference type="Pfam" id="PF00196">
    <property type="entry name" value="GerE"/>
    <property type="match status" value="1"/>
</dbReference>
<dbReference type="Pfam" id="PF00072">
    <property type="entry name" value="Response_reg"/>
    <property type="match status" value="1"/>
</dbReference>
<dbReference type="PRINTS" id="PR00038">
    <property type="entry name" value="HTHLUXR"/>
</dbReference>
<dbReference type="SMART" id="SM00421">
    <property type="entry name" value="HTH_LUXR"/>
    <property type="match status" value="1"/>
</dbReference>
<dbReference type="SMART" id="SM00448">
    <property type="entry name" value="REC"/>
    <property type="match status" value="1"/>
</dbReference>
<dbReference type="SUPFAM" id="SSF52172">
    <property type="entry name" value="CheY-like"/>
    <property type="match status" value="1"/>
</dbReference>
<dbReference type="PROSITE" id="PS00622">
    <property type="entry name" value="HTH_LUXR_1"/>
    <property type="match status" value="1"/>
</dbReference>
<dbReference type="PROSITE" id="PS50043">
    <property type="entry name" value="HTH_LUXR_2"/>
    <property type="match status" value="1"/>
</dbReference>
<dbReference type="PROSITE" id="PS50110">
    <property type="entry name" value="RESPONSE_REGULATORY"/>
    <property type="match status" value="1"/>
</dbReference>
<feature type="chain" id="PRO_0000417423" description="Tetrathionate response regulatory protein TtrR">
    <location>
        <begin position="1"/>
        <end position="206"/>
    </location>
</feature>
<feature type="domain" description="Response regulatory" evidence="2">
    <location>
        <begin position="3"/>
        <end position="117"/>
    </location>
</feature>
<feature type="domain" description="HTH luxR-type" evidence="3">
    <location>
        <begin position="134"/>
        <end position="194"/>
    </location>
</feature>
<feature type="DNA-binding region" description="H-T-H motif" evidence="3">
    <location>
        <begin position="153"/>
        <end position="172"/>
    </location>
</feature>
<feature type="modified residue" description="4-aspartylphosphate" evidence="2">
    <location>
        <position position="52"/>
    </location>
</feature>
<name>TTRR_SALTY</name>
<proteinExistence type="evidence at protein level"/>
<protein>
    <recommendedName>
        <fullName>Tetrathionate response regulatory protein TtrR</fullName>
    </recommendedName>
</protein>
<gene>
    <name type="primary">ttrR</name>
    <name type="ordered locus">STM1387</name>
</gene>
<sequence length="206" mass="22692">MATIHLLDDDTAVTNACAFLLESLGYDVKCWTQGADFLAQASLYQAGVVLLDMRMPVLDGQGVHDALRQCGSTLAVVFLTGHGDVPMAVEQMKRGAVDFLQKPVSVKPLQAALERALTVSSAAVARREIILCYQQLTPKERELASLVAKGFMNREIAEAMNIAVRTVEVHRARVMEKMQAGSLAELIRRFEKMASPETRIRTTYEP</sequence>
<accession>Q7CQM8</accession>
<accession>Q7B2G4</accession>
<accession>Q7BK20</accession>
<keyword id="KW-0010">Activator</keyword>
<keyword id="KW-0963">Cytoplasm</keyword>
<keyword id="KW-0238">DNA-binding</keyword>
<keyword id="KW-0597">Phosphoprotein</keyword>
<keyword id="KW-1185">Reference proteome</keyword>
<keyword id="KW-0804">Transcription</keyword>
<keyword id="KW-0805">Transcription regulation</keyword>
<keyword id="KW-0902">Two-component regulatory system</keyword>
<reference key="1">
    <citation type="journal article" date="1999" name="Mol. Microbiol.">
        <title>Molecular and functional analysis indicates a mosaic structure of Salmonella pathogenicity island 2.</title>
        <authorList>
            <person name="Hensel M."/>
            <person name="Egelseer C."/>
            <person name="Nikolaus T."/>
        </authorList>
    </citation>
    <scope>NUCLEOTIDE SEQUENCE [GENOMIC DNA]</scope>
    <source>
        <strain>LT2</strain>
    </source>
</reference>
<reference key="2">
    <citation type="journal article" date="2001" name="J. Bacteriol.">
        <title>The alternative electron acceptor tetrathionate supports B12-dependent anaerobic growth of Salmonella enterica serovar typhimurium on ethanolamine or 1,2-propanediol.</title>
        <authorList>
            <person name="Price-Carter M."/>
            <person name="Tingey J."/>
            <person name="Bobik T.A."/>
            <person name="Roth J.R."/>
        </authorList>
    </citation>
    <scope>NUCLEOTIDE SEQUENCE [GENOMIC DNA]</scope>
    <scope>FUNCTION</scope>
    <source>
        <strain>LT2</strain>
    </source>
</reference>
<reference key="3">
    <citation type="journal article" date="2001" name="Nature">
        <title>Complete genome sequence of Salmonella enterica serovar Typhimurium LT2.</title>
        <authorList>
            <person name="McClelland M."/>
            <person name="Sanderson K.E."/>
            <person name="Spieth J."/>
            <person name="Clifton S.W."/>
            <person name="Latreille P."/>
            <person name="Courtney L."/>
            <person name="Porwollik S."/>
            <person name="Ali J."/>
            <person name="Dante M."/>
            <person name="Du F."/>
            <person name="Hou S."/>
            <person name="Layman D."/>
            <person name="Leonard S."/>
            <person name="Nguyen C."/>
            <person name="Scott K."/>
            <person name="Holmes A."/>
            <person name="Grewal N."/>
            <person name="Mulvaney E."/>
            <person name="Ryan E."/>
            <person name="Sun H."/>
            <person name="Florea L."/>
            <person name="Miller W."/>
            <person name="Stoneking T."/>
            <person name="Nhan M."/>
            <person name="Waterston R."/>
            <person name="Wilson R.K."/>
        </authorList>
    </citation>
    <scope>NUCLEOTIDE SEQUENCE [LARGE SCALE GENOMIC DNA]</scope>
    <source>
        <strain>LT2 / SGSC1412 / ATCC 700720</strain>
    </source>
</reference>
<reference key="4">
    <citation type="journal article" date="1999" name="Mol. Microbiol.">
        <title>The genetic basis of tetrathionate respiration in Salmonella typhimurium.</title>
        <authorList>
            <person name="Hensel M."/>
            <person name="Hinsley A.P."/>
            <person name="Nikolaus T."/>
            <person name="Sawers G."/>
            <person name="Berks B.C."/>
        </authorList>
    </citation>
    <scope>FUNCTION</scope>
    <source>
        <strain>LT2</strain>
    </source>
</reference>
<reference key="5">
    <citation type="journal article" date="2010" name="Nature">
        <title>Gut inflammation provides a respiratory electron acceptor for Salmonella.</title>
        <authorList>
            <person name="Winter S.E."/>
            <person name="Thiennimitr P."/>
            <person name="Winter M.G."/>
            <person name="Butler B.P."/>
            <person name="Huseby D.L."/>
            <person name="Crawford R.W."/>
            <person name="Russell J.M."/>
            <person name="Bevins C.L."/>
            <person name="Adams L.G."/>
            <person name="Tsolis R.M."/>
            <person name="Roth J.R."/>
            <person name="Baumler A.J."/>
        </authorList>
    </citation>
    <scope>FUNCTION IN VIRULENCE</scope>
</reference>
<evidence type="ECO:0000250" key="1"/>
<evidence type="ECO:0000255" key="2">
    <source>
        <dbReference type="PROSITE-ProRule" id="PRU00169"/>
    </source>
</evidence>
<evidence type="ECO:0000255" key="3">
    <source>
        <dbReference type="PROSITE-ProRule" id="PRU00411"/>
    </source>
</evidence>
<evidence type="ECO:0000269" key="4">
    <source>
    </source>
</evidence>
<evidence type="ECO:0000269" key="5">
    <source>
    </source>
</evidence>
<evidence type="ECO:0000269" key="6">
    <source>
    </source>
</evidence>
<evidence type="ECO:0000305" key="7"/>